<keyword id="KW-0175">Coiled coil</keyword>
<keyword id="KW-0472">Membrane</keyword>
<keyword id="KW-0496">Mitochondrion</keyword>
<keyword id="KW-1185">Reference proteome</keyword>
<keyword id="KW-0812">Transmembrane</keyword>
<keyword id="KW-1133">Transmembrane helix</keyword>
<dbReference type="EMBL" id="GG692419">
    <property type="protein sequence ID" value="EER45173.1"/>
    <property type="molecule type" value="Genomic_DNA"/>
</dbReference>
<dbReference type="STRING" id="544712.C6H220"/>
<dbReference type="VEuPathDB" id="FungiDB:HCDG_00752"/>
<dbReference type="eggNOG" id="KOG4431">
    <property type="taxonomic scope" value="Eukaryota"/>
</dbReference>
<dbReference type="HOGENOM" id="CLU_087356_0_2_1"/>
<dbReference type="OMA" id="QRWIREL"/>
<dbReference type="OrthoDB" id="4926at299071"/>
<dbReference type="Proteomes" id="UP000002624">
    <property type="component" value="Unassembled WGS sequence"/>
</dbReference>
<dbReference type="GO" id="GO:0031966">
    <property type="term" value="C:mitochondrial membrane"/>
    <property type="evidence" value="ECO:0007669"/>
    <property type="project" value="UniProtKB-SubCell"/>
</dbReference>
<dbReference type="GO" id="GO:0097250">
    <property type="term" value="P:mitochondrial respirasome assembly"/>
    <property type="evidence" value="ECO:0007669"/>
    <property type="project" value="TreeGrafter"/>
</dbReference>
<dbReference type="InterPro" id="IPR007667">
    <property type="entry name" value="Hypoxia_induced_domain"/>
</dbReference>
<dbReference type="InterPro" id="IPR050355">
    <property type="entry name" value="RCF1"/>
</dbReference>
<dbReference type="PANTHER" id="PTHR12297:SF3">
    <property type="entry name" value="HIG1 DOMAIN FAMILY MEMBER 1A"/>
    <property type="match status" value="1"/>
</dbReference>
<dbReference type="PANTHER" id="PTHR12297">
    <property type="entry name" value="HYPOXIA-INDUCBILE GENE 1 HIG1 -RELATED"/>
    <property type="match status" value="1"/>
</dbReference>
<dbReference type="Pfam" id="PF04588">
    <property type="entry name" value="HIG_1_N"/>
    <property type="match status" value="1"/>
</dbReference>
<dbReference type="PROSITE" id="PS51503">
    <property type="entry name" value="HIG1"/>
    <property type="match status" value="1"/>
</dbReference>
<comment type="function">
    <text evidence="1">Cytochrome c oxidase subunit which plays a role in assembly of respiratory supercomplexes.</text>
</comment>
<comment type="subunit">
    <text evidence="1">Associates with the respiratory chain complex III/complex IV supercomplex.</text>
</comment>
<comment type="subcellular location">
    <subcellularLocation>
        <location evidence="3">Mitochondrion membrane</location>
        <topology evidence="3">Multi-pass membrane protein</topology>
    </subcellularLocation>
</comment>
<comment type="similarity">
    <text evidence="4">Belongs to the RCF1 family.</text>
</comment>
<feature type="chain" id="PRO_0000399610" description="Respiratory supercomplex factor 1, mitochondrial">
    <location>
        <begin position="1"/>
        <end position="145"/>
    </location>
</feature>
<feature type="transmembrane region" description="Helical" evidence="3">
    <location>
        <begin position="33"/>
        <end position="50"/>
    </location>
</feature>
<feature type="transmembrane region" description="Helical" evidence="3">
    <location>
        <begin position="69"/>
        <end position="86"/>
    </location>
</feature>
<feature type="domain" description="HIG1" evidence="3">
    <location>
        <begin position="6"/>
        <end position="97"/>
    </location>
</feature>
<feature type="coiled-coil region" evidence="2">
    <location>
        <begin position="86"/>
        <end position="144"/>
    </location>
</feature>
<protein>
    <recommendedName>
        <fullName>Respiratory supercomplex factor 1, mitochondrial</fullName>
    </recommendedName>
</protein>
<organism>
    <name type="scientific">Ajellomyces capsulatus (strain H143)</name>
    <name type="common">Darling's disease fungus</name>
    <name type="synonym">Histoplasma capsulatum</name>
    <dbReference type="NCBI Taxonomy" id="544712"/>
    <lineage>
        <taxon>Eukaryota</taxon>
        <taxon>Fungi</taxon>
        <taxon>Dikarya</taxon>
        <taxon>Ascomycota</taxon>
        <taxon>Pezizomycotina</taxon>
        <taxon>Eurotiomycetes</taxon>
        <taxon>Eurotiomycetidae</taxon>
        <taxon>Onygenales</taxon>
        <taxon>Ajellomycetaceae</taxon>
        <taxon>Histoplasma</taxon>
    </lineage>
</organism>
<proteinExistence type="inferred from homology"/>
<reference key="1">
    <citation type="submission" date="2009-05" db="EMBL/GenBank/DDBJ databases">
        <title>The genome sequence of Ajellomyces capsulatus strain H143.</title>
        <authorList>
            <person name="Champion M."/>
            <person name="Cuomo C.A."/>
            <person name="Ma L.-J."/>
            <person name="Henn M.R."/>
            <person name="Sil A."/>
            <person name="Goldman B."/>
            <person name="Young S.K."/>
            <person name="Kodira C.D."/>
            <person name="Zeng Q."/>
            <person name="Koehrsen M."/>
            <person name="Alvarado L."/>
            <person name="Berlin A.M."/>
            <person name="Borenstein D."/>
            <person name="Chen Z."/>
            <person name="Engels R."/>
            <person name="Freedman E."/>
            <person name="Gellesch M."/>
            <person name="Goldberg J."/>
            <person name="Griggs A."/>
            <person name="Gujja S."/>
            <person name="Heiman D.I."/>
            <person name="Hepburn T.A."/>
            <person name="Howarth C."/>
            <person name="Jen D."/>
            <person name="Larson L."/>
            <person name="Lewis B."/>
            <person name="Mehta T."/>
            <person name="Park D."/>
            <person name="Pearson M."/>
            <person name="Roberts A."/>
            <person name="Saif S."/>
            <person name="Shea T.D."/>
            <person name="Shenoy N."/>
            <person name="Sisk P."/>
            <person name="Stolte C."/>
            <person name="Sykes S."/>
            <person name="Walk T."/>
            <person name="White J."/>
            <person name="Yandava C."/>
            <person name="Klein B."/>
            <person name="McEwen J.G."/>
            <person name="Puccia R."/>
            <person name="Goldman G.H."/>
            <person name="Felipe M.S."/>
            <person name="Nino-Vega G."/>
            <person name="San-Blas G."/>
            <person name="Taylor J.W."/>
            <person name="Mendoza L."/>
            <person name="Galagan J.E."/>
            <person name="Nusbaum C."/>
            <person name="Birren B.W."/>
        </authorList>
    </citation>
    <scope>NUCLEOTIDE SEQUENCE [LARGE SCALE GENOMIC DNA]</scope>
    <source>
        <strain>H143</strain>
    </source>
</reference>
<name>RCF1_AJECH</name>
<sequence length="145" mass="17219">MSNTPLPSSFDAHPEFFQETKWQKFTRRIKEEPLIPIGYAATSYALWRAYKSMKAGDSVELNRMFRARIYGHAFTLFAIVAGGIYYGQERRQRKEFEKALQQKQDQEKRDAWLKELEIRDKEDKDWRQRHAAIEMAAKEAEKKRG</sequence>
<evidence type="ECO:0000250" key="1"/>
<evidence type="ECO:0000255" key="2"/>
<evidence type="ECO:0000255" key="3">
    <source>
        <dbReference type="PROSITE-ProRule" id="PRU00836"/>
    </source>
</evidence>
<evidence type="ECO:0000305" key="4"/>
<accession>C6H220</accession>
<gene>
    <name type="primary">RCF1</name>
    <name type="synonym">AIM31</name>
    <name type="ORF">HCDG_00752</name>
</gene>